<gene>
    <name evidence="1" type="primary">rpsI</name>
    <name type="ordered locus">VC0395_A0104</name>
    <name type="ordered locus">VC395_0588</name>
</gene>
<feature type="chain" id="PRO_1000072526" description="Small ribosomal subunit protein uS9">
    <location>
        <begin position="1"/>
        <end position="130"/>
    </location>
</feature>
<protein>
    <recommendedName>
        <fullName evidence="1">Small ribosomal subunit protein uS9</fullName>
    </recommendedName>
    <alternativeName>
        <fullName evidence="2">30S ribosomal protein S9</fullName>
    </alternativeName>
</protein>
<accession>A5F998</accession>
<accession>C3LX97</accession>
<dbReference type="EMBL" id="CP000627">
    <property type="protein sequence ID" value="ABQ20092.1"/>
    <property type="molecule type" value="Genomic_DNA"/>
</dbReference>
<dbReference type="EMBL" id="CP001235">
    <property type="protein sequence ID" value="ACP08607.1"/>
    <property type="molecule type" value="Genomic_DNA"/>
</dbReference>
<dbReference type="RefSeq" id="WP_000829823.1">
    <property type="nucleotide sequence ID" value="NZ_JAACZH010000006.1"/>
</dbReference>
<dbReference type="SMR" id="A5F998"/>
<dbReference type="GeneID" id="94014649"/>
<dbReference type="KEGG" id="vco:VC0395_A0104"/>
<dbReference type="KEGG" id="vcr:VC395_0588"/>
<dbReference type="PATRIC" id="fig|345073.21.peg.575"/>
<dbReference type="eggNOG" id="COG0103">
    <property type="taxonomic scope" value="Bacteria"/>
</dbReference>
<dbReference type="HOGENOM" id="CLU_046483_2_1_6"/>
<dbReference type="OrthoDB" id="9803965at2"/>
<dbReference type="Proteomes" id="UP000000249">
    <property type="component" value="Chromosome 2"/>
</dbReference>
<dbReference type="GO" id="GO:0022627">
    <property type="term" value="C:cytosolic small ribosomal subunit"/>
    <property type="evidence" value="ECO:0007669"/>
    <property type="project" value="TreeGrafter"/>
</dbReference>
<dbReference type="GO" id="GO:0003723">
    <property type="term" value="F:RNA binding"/>
    <property type="evidence" value="ECO:0007669"/>
    <property type="project" value="TreeGrafter"/>
</dbReference>
<dbReference type="GO" id="GO:0003735">
    <property type="term" value="F:structural constituent of ribosome"/>
    <property type="evidence" value="ECO:0007669"/>
    <property type="project" value="InterPro"/>
</dbReference>
<dbReference type="GO" id="GO:0006412">
    <property type="term" value="P:translation"/>
    <property type="evidence" value="ECO:0007669"/>
    <property type="project" value="UniProtKB-UniRule"/>
</dbReference>
<dbReference type="FunFam" id="3.30.230.10:FF:000001">
    <property type="entry name" value="30S ribosomal protein S9"/>
    <property type="match status" value="1"/>
</dbReference>
<dbReference type="Gene3D" id="3.30.230.10">
    <property type="match status" value="1"/>
</dbReference>
<dbReference type="HAMAP" id="MF_00532_B">
    <property type="entry name" value="Ribosomal_uS9_B"/>
    <property type="match status" value="1"/>
</dbReference>
<dbReference type="InterPro" id="IPR020568">
    <property type="entry name" value="Ribosomal_Su5_D2-typ_SF"/>
</dbReference>
<dbReference type="InterPro" id="IPR000754">
    <property type="entry name" value="Ribosomal_uS9"/>
</dbReference>
<dbReference type="InterPro" id="IPR023035">
    <property type="entry name" value="Ribosomal_uS9_bac/plastid"/>
</dbReference>
<dbReference type="InterPro" id="IPR020574">
    <property type="entry name" value="Ribosomal_uS9_CS"/>
</dbReference>
<dbReference type="InterPro" id="IPR014721">
    <property type="entry name" value="Ribsml_uS5_D2-typ_fold_subgr"/>
</dbReference>
<dbReference type="NCBIfam" id="NF001099">
    <property type="entry name" value="PRK00132.1"/>
    <property type="match status" value="1"/>
</dbReference>
<dbReference type="PANTHER" id="PTHR21569">
    <property type="entry name" value="RIBOSOMAL PROTEIN S9"/>
    <property type="match status" value="1"/>
</dbReference>
<dbReference type="PANTHER" id="PTHR21569:SF1">
    <property type="entry name" value="SMALL RIBOSOMAL SUBUNIT PROTEIN US9M"/>
    <property type="match status" value="1"/>
</dbReference>
<dbReference type="Pfam" id="PF00380">
    <property type="entry name" value="Ribosomal_S9"/>
    <property type="match status" value="1"/>
</dbReference>
<dbReference type="SUPFAM" id="SSF54211">
    <property type="entry name" value="Ribosomal protein S5 domain 2-like"/>
    <property type="match status" value="1"/>
</dbReference>
<dbReference type="PROSITE" id="PS00360">
    <property type="entry name" value="RIBOSOMAL_S9"/>
    <property type="match status" value="1"/>
</dbReference>
<organism>
    <name type="scientific">Vibrio cholerae serotype O1 (strain ATCC 39541 / Classical Ogawa 395 / O395)</name>
    <dbReference type="NCBI Taxonomy" id="345073"/>
    <lineage>
        <taxon>Bacteria</taxon>
        <taxon>Pseudomonadati</taxon>
        <taxon>Pseudomonadota</taxon>
        <taxon>Gammaproteobacteria</taxon>
        <taxon>Vibrionales</taxon>
        <taxon>Vibrionaceae</taxon>
        <taxon>Vibrio</taxon>
    </lineage>
</organism>
<proteinExistence type="inferred from homology"/>
<name>RS9_VIBC3</name>
<keyword id="KW-0687">Ribonucleoprotein</keyword>
<keyword id="KW-0689">Ribosomal protein</keyword>
<evidence type="ECO:0000255" key="1">
    <source>
        <dbReference type="HAMAP-Rule" id="MF_00532"/>
    </source>
</evidence>
<evidence type="ECO:0000305" key="2"/>
<sequence>MAENQYYGTGRRKSSAARVFIKPGSGNIVINKRSLEEYFGRPTSCMVVKQPLELVDMVEKLDLYITVKGGGISGQAGAIRHGITRALMEYDESLRPVLRAAGYVTRDARRVERKKVGLRKARRRPQFSKR</sequence>
<comment type="similarity">
    <text evidence="1">Belongs to the universal ribosomal protein uS9 family.</text>
</comment>
<reference key="1">
    <citation type="submission" date="2007-03" db="EMBL/GenBank/DDBJ databases">
        <authorList>
            <person name="Heidelberg J."/>
        </authorList>
    </citation>
    <scope>NUCLEOTIDE SEQUENCE [LARGE SCALE GENOMIC DNA]</scope>
    <source>
        <strain>ATCC 39541 / Classical Ogawa 395 / O395</strain>
    </source>
</reference>
<reference key="2">
    <citation type="journal article" date="2008" name="PLoS ONE">
        <title>A recalibrated molecular clock and independent origins for the cholera pandemic clones.</title>
        <authorList>
            <person name="Feng L."/>
            <person name="Reeves P.R."/>
            <person name="Lan R."/>
            <person name="Ren Y."/>
            <person name="Gao C."/>
            <person name="Zhou Z."/>
            <person name="Ren Y."/>
            <person name="Cheng J."/>
            <person name="Wang W."/>
            <person name="Wang J."/>
            <person name="Qian W."/>
            <person name="Li D."/>
            <person name="Wang L."/>
        </authorList>
    </citation>
    <scope>NUCLEOTIDE SEQUENCE [LARGE SCALE GENOMIC DNA]</scope>
    <source>
        <strain>ATCC 39541 / Classical Ogawa 395 / O395</strain>
    </source>
</reference>